<evidence type="ECO:0000255" key="1">
    <source>
        <dbReference type="HAMAP-Rule" id="MF_01315"/>
    </source>
</evidence>
<evidence type="ECO:0000256" key="2">
    <source>
        <dbReference type="SAM" id="MobiDB-lite"/>
    </source>
</evidence>
<evidence type="ECO:0000305" key="3"/>
<sequence length="122" mass="13982">MARIAGIDLPKKKKIEYALPYIYGIGLTTSRKILKDTGIDPEKRVYELTEDEVSILNKEIQSNYIVEGELRKIVQLNIKELMDLGCYRGLRHRRGLPVRGQRTKTNARTRKGKRKTVGAKAK</sequence>
<feature type="chain" id="PRO_1000165631" description="Small ribosomal subunit protein uS13">
    <location>
        <begin position="1"/>
        <end position="122"/>
    </location>
</feature>
<feature type="region of interest" description="Disordered" evidence="2">
    <location>
        <begin position="98"/>
        <end position="122"/>
    </location>
</feature>
<organism>
    <name type="scientific">Nautilia profundicola (strain ATCC BAA-1463 / DSM 18972 / AmH)</name>
    <dbReference type="NCBI Taxonomy" id="598659"/>
    <lineage>
        <taxon>Bacteria</taxon>
        <taxon>Pseudomonadati</taxon>
        <taxon>Campylobacterota</taxon>
        <taxon>Epsilonproteobacteria</taxon>
        <taxon>Nautiliales</taxon>
        <taxon>Nautiliaceae</taxon>
        <taxon>Nautilia</taxon>
    </lineage>
</organism>
<protein>
    <recommendedName>
        <fullName evidence="1">Small ribosomal subunit protein uS13</fullName>
    </recommendedName>
    <alternativeName>
        <fullName evidence="3">30S ribosomal protein S13</fullName>
    </alternativeName>
</protein>
<dbReference type="EMBL" id="CP001279">
    <property type="protein sequence ID" value="ACM93568.1"/>
    <property type="molecule type" value="Genomic_DNA"/>
</dbReference>
<dbReference type="RefSeq" id="WP_015902620.1">
    <property type="nucleotide sequence ID" value="NC_012115.1"/>
</dbReference>
<dbReference type="SMR" id="B9L6U0"/>
<dbReference type="STRING" id="598659.NAMH_1698"/>
<dbReference type="KEGG" id="nam:NAMH_1698"/>
<dbReference type="eggNOG" id="COG0099">
    <property type="taxonomic scope" value="Bacteria"/>
</dbReference>
<dbReference type="HOGENOM" id="CLU_103849_1_2_7"/>
<dbReference type="OrthoDB" id="9803610at2"/>
<dbReference type="Proteomes" id="UP000000448">
    <property type="component" value="Chromosome"/>
</dbReference>
<dbReference type="GO" id="GO:0005829">
    <property type="term" value="C:cytosol"/>
    <property type="evidence" value="ECO:0007669"/>
    <property type="project" value="TreeGrafter"/>
</dbReference>
<dbReference type="GO" id="GO:0015935">
    <property type="term" value="C:small ribosomal subunit"/>
    <property type="evidence" value="ECO:0007669"/>
    <property type="project" value="TreeGrafter"/>
</dbReference>
<dbReference type="GO" id="GO:0019843">
    <property type="term" value="F:rRNA binding"/>
    <property type="evidence" value="ECO:0007669"/>
    <property type="project" value="UniProtKB-UniRule"/>
</dbReference>
<dbReference type="GO" id="GO:0003735">
    <property type="term" value="F:structural constituent of ribosome"/>
    <property type="evidence" value="ECO:0007669"/>
    <property type="project" value="InterPro"/>
</dbReference>
<dbReference type="GO" id="GO:0000049">
    <property type="term" value="F:tRNA binding"/>
    <property type="evidence" value="ECO:0007669"/>
    <property type="project" value="UniProtKB-UniRule"/>
</dbReference>
<dbReference type="GO" id="GO:0006412">
    <property type="term" value="P:translation"/>
    <property type="evidence" value="ECO:0007669"/>
    <property type="project" value="UniProtKB-UniRule"/>
</dbReference>
<dbReference type="FunFam" id="1.10.8.50:FF:000001">
    <property type="entry name" value="30S ribosomal protein S13"/>
    <property type="match status" value="1"/>
</dbReference>
<dbReference type="FunFam" id="4.10.910.10:FF:000001">
    <property type="entry name" value="30S ribosomal protein S13"/>
    <property type="match status" value="1"/>
</dbReference>
<dbReference type="Gene3D" id="1.10.8.50">
    <property type="match status" value="1"/>
</dbReference>
<dbReference type="Gene3D" id="4.10.910.10">
    <property type="entry name" value="30s ribosomal protein s13, domain 2"/>
    <property type="match status" value="1"/>
</dbReference>
<dbReference type="HAMAP" id="MF_01315">
    <property type="entry name" value="Ribosomal_uS13"/>
    <property type="match status" value="1"/>
</dbReference>
<dbReference type="InterPro" id="IPR027437">
    <property type="entry name" value="Rbsml_uS13_C"/>
</dbReference>
<dbReference type="InterPro" id="IPR001892">
    <property type="entry name" value="Ribosomal_uS13"/>
</dbReference>
<dbReference type="InterPro" id="IPR010979">
    <property type="entry name" value="Ribosomal_uS13-like_H2TH"/>
</dbReference>
<dbReference type="InterPro" id="IPR019980">
    <property type="entry name" value="Ribosomal_uS13_bac-type"/>
</dbReference>
<dbReference type="InterPro" id="IPR018269">
    <property type="entry name" value="Ribosomal_uS13_CS"/>
</dbReference>
<dbReference type="NCBIfam" id="TIGR03631">
    <property type="entry name" value="uS13_bact"/>
    <property type="match status" value="1"/>
</dbReference>
<dbReference type="PANTHER" id="PTHR10871">
    <property type="entry name" value="30S RIBOSOMAL PROTEIN S13/40S RIBOSOMAL PROTEIN S18"/>
    <property type="match status" value="1"/>
</dbReference>
<dbReference type="PANTHER" id="PTHR10871:SF1">
    <property type="entry name" value="SMALL RIBOSOMAL SUBUNIT PROTEIN US13M"/>
    <property type="match status" value="1"/>
</dbReference>
<dbReference type="Pfam" id="PF00416">
    <property type="entry name" value="Ribosomal_S13"/>
    <property type="match status" value="1"/>
</dbReference>
<dbReference type="PIRSF" id="PIRSF002134">
    <property type="entry name" value="Ribosomal_S13"/>
    <property type="match status" value="1"/>
</dbReference>
<dbReference type="SUPFAM" id="SSF46946">
    <property type="entry name" value="S13-like H2TH domain"/>
    <property type="match status" value="1"/>
</dbReference>
<dbReference type="PROSITE" id="PS00646">
    <property type="entry name" value="RIBOSOMAL_S13_1"/>
    <property type="match status" value="1"/>
</dbReference>
<dbReference type="PROSITE" id="PS50159">
    <property type="entry name" value="RIBOSOMAL_S13_2"/>
    <property type="match status" value="1"/>
</dbReference>
<reference key="1">
    <citation type="journal article" date="2009" name="PLoS Genet.">
        <title>Adaptations to submarine hydrothermal environments exemplified by the genome of Nautilia profundicola.</title>
        <authorList>
            <person name="Campbell B.J."/>
            <person name="Smith J.L."/>
            <person name="Hanson T.E."/>
            <person name="Klotz M.G."/>
            <person name="Stein L.Y."/>
            <person name="Lee C.K."/>
            <person name="Wu D."/>
            <person name="Robinson J.M."/>
            <person name="Khouri H.M."/>
            <person name="Eisen J.A."/>
            <person name="Cary S.C."/>
        </authorList>
    </citation>
    <scope>NUCLEOTIDE SEQUENCE [LARGE SCALE GENOMIC DNA]</scope>
    <source>
        <strain>ATCC BAA-1463 / DSM 18972 / AmH</strain>
    </source>
</reference>
<name>RS13_NAUPA</name>
<accession>B9L6U0</accession>
<keyword id="KW-0687">Ribonucleoprotein</keyword>
<keyword id="KW-0689">Ribosomal protein</keyword>
<keyword id="KW-0694">RNA-binding</keyword>
<keyword id="KW-0699">rRNA-binding</keyword>
<keyword id="KW-0820">tRNA-binding</keyword>
<gene>
    <name evidence="1" type="primary">rpsM</name>
    <name type="ordered locus">NAMH_1698</name>
</gene>
<comment type="function">
    <text evidence="1">Located at the top of the head of the 30S subunit, it contacts several helices of the 16S rRNA. In the 70S ribosome it contacts the 23S rRNA (bridge B1a) and protein L5 of the 50S subunit (bridge B1b), connecting the 2 subunits; these bridges are implicated in subunit movement. Contacts the tRNAs in the A and P-sites.</text>
</comment>
<comment type="subunit">
    <text evidence="1">Part of the 30S ribosomal subunit. Forms a loose heterodimer with protein S19. Forms two bridges to the 50S subunit in the 70S ribosome.</text>
</comment>
<comment type="similarity">
    <text evidence="1">Belongs to the universal ribosomal protein uS13 family.</text>
</comment>
<proteinExistence type="inferred from homology"/>